<evidence type="ECO:0000255" key="1">
    <source>
        <dbReference type="HAMAP-Rule" id="MF_00013"/>
    </source>
</evidence>
<evidence type="ECO:0000255" key="2">
    <source>
        <dbReference type="PROSITE-ProRule" id="PRU01067"/>
    </source>
</evidence>
<accession>Q6KZK7</accession>
<proteinExistence type="inferred from homology"/>
<organism>
    <name type="scientific">Picrophilus torridus (strain ATCC 700027 / DSM 9790 / JCM 10055 / NBRC 100828 / KAW 2/3)</name>
    <dbReference type="NCBI Taxonomy" id="1122961"/>
    <lineage>
        <taxon>Archaea</taxon>
        <taxon>Methanobacteriati</taxon>
        <taxon>Thermoplasmatota</taxon>
        <taxon>Thermoplasmata</taxon>
        <taxon>Thermoplasmatales</taxon>
        <taxon>Picrophilaceae</taxon>
        <taxon>Picrophilus</taxon>
    </lineage>
</organism>
<protein>
    <recommendedName>
        <fullName evidence="1">Probable octanoyltransferase 2</fullName>
        <ecNumber evidence="1">2.3.1.181</ecNumber>
    </recommendedName>
    <alternativeName>
        <fullName evidence="1">Lipoate-protein ligase B 2</fullName>
    </alternativeName>
    <alternativeName>
        <fullName evidence="1">Lipoyl/octanoyl transferase 2</fullName>
    </alternativeName>
    <alternativeName>
        <fullName evidence="1">Octanoyl-[acyl-carrier-protein]-protein N-octanoyltransferase 2</fullName>
    </alternativeName>
</protein>
<comment type="function">
    <text evidence="1">Catalyzes the transfer of endogenously produced octanoic acid from octanoyl-acyl-carrier-protein onto the lipoyl domains of lipoate-dependent enzymes. Lipoyl-ACP can also act as a substrate although octanoyl-ACP is likely to be the physiological substrate.</text>
</comment>
<comment type="catalytic activity">
    <reaction evidence="1">
        <text>octanoyl-[ACP] + L-lysyl-[protein] = N(6)-octanoyl-L-lysyl-[protein] + holo-[ACP] + H(+)</text>
        <dbReference type="Rhea" id="RHEA:17665"/>
        <dbReference type="Rhea" id="RHEA-COMP:9636"/>
        <dbReference type="Rhea" id="RHEA-COMP:9685"/>
        <dbReference type="Rhea" id="RHEA-COMP:9752"/>
        <dbReference type="Rhea" id="RHEA-COMP:9928"/>
        <dbReference type="ChEBI" id="CHEBI:15378"/>
        <dbReference type="ChEBI" id="CHEBI:29969"/>
        <dbReference type="ChEBI" id="CHEBI:64479"/>
        <dbReference type="ChEBI" id="CHEBI:78463"/>
        <dbReference type="ChEBI" id="CHEBI:78809"/>
        <dbReference type="EC" id="2.3.1.181"/>
    </reaction>
</comment>
<comment type="pathway">
    <text evidence="1">Protein modification; protein lipoylation via endogenous pathway; protein N(6)-(lipoyl)lysine from octanoyl-[acyl-carrier-protein]: step 1/2.</text>
</comment>
<comment type="subcellular location">
    <subcellularLocation>
        <location evidence="1">Cytoplasm</location>
    </subcellularLocation>
</comment>
<comment type="miscellaneous">
    <text evidence="1">In the reaction, the free carboxyl group of octanoic acid is attached via an amide linkage to the epsilon-amino group of a specific lysine residue of lipoyl domains of lipoate-dependent enzymes.</text>
</comment>
<comment type="similarity">
    <text evidence="1">Belongs to the LipB family.</text>
</comment>
<keyword id="KW-0012">Acyltransferase</keyword>
<keyword id="KW-0963">Cytoplasm</keyword>
<keyword id="KW-0808">Transferase</keyword>
<dbReference type="EC" id="2.3.1.181" evidence="1"/>
<dbReference type="EMBL" id="AE017261">
    <property type="protein sequence ID" value="AAT43845.1"/>
    <property type="molecule type" value="Genomic_DNA"/>
</dbReference>
<dbReference type="SMR" id="Q6KZK7"/>
<dbReference type="STRING" id="263820.PTO1260"/>
<dbReference type="PaxDb" id="263820-PTO1260"/>
<dbReference type="KEGG" id="pto:PTO1260"/>
<dbReference type="PATRIC" id="fig|263820.9.peg.1308"/>
<dbReference type="eggNOG" id="arCOG01942">
    <property type="taxonomic scope" value="Archaea"/>
</dbReference>
<dbReference type="HOGENOM" id="CLU_035168_3_1_2"/>
<dbReference type="InParanoid" id="Q6KZK7"/>
<dbReference type="OrthoDB" id="57380at2157"/>
<dbReference type="UniPathway" id="UPA00538">
    <property type="reaction ID" value="UER00592"/>
</dbReference>
<dbReference type="Proteomes" id="UP000000438">
    <property type="component" value="Chromosome"/>
</dbReference>
<dbReference type="GO" id="GO:0005737">
    <property type="term" value="C:cytoplasm"/>
    <property type="evidence" value="ECO:0007669"/>
    <property type="project" value="UniProtKB-SubCell"/>
</dbReference>
<dbReference type="GO" id="GO:0033819">
    <property type="term" value="F:lipoyl(octanoyl) transferase activity"/>
    <property type="evidence" value="ECO:0007669"/>
    <property type="project" value="UniProtKB-EC"/>
</dbReference>
<dbReference type="GO" id="GO:0036211">
    <property type="term" value="P:protein modification process"/>
    <property type="evidence" value="ECO:0007669"/>
    <property type="project" value="InterPro"/>
</dbReference>
<dbReference type="CDD" id="cd16444">
    <property type="entry name" value="LipB"/>
    <property type="match status" value="1"/>
</dbReference>
<dbReference type="Gene3D" id="3.30.930.10">
    <property type="entry name" value="Bira Bifunctional Protein, Domain 2"/>
    <property type="match status" value="1"/>
</dbReference>
<dbReference type="HAMAP" id="MF_00013">
    <property type="entry name" value="LipB"/>
    <property type="match status" value="1"/>
</dbReference>
<dbReference type="InterPro" id="IPR045864">
    <property type="entry name" value="aa-tRNA-synth_II/BPL/LPL"/>
</dbReference>
<dbReference type="InterPro" id="IPR004143">
    <property type="entry name" value="BPL_LPL_catalytic"/>
</dbReference>
<dbReference type="InterPro" id="IPR000544">
    <property type="entry name" value="Octanoyltransferase"/>
</dbReference>
<dbReference type="InterPro" id="IPR020605">
    <property type="entry name" value="Octanoyltransferase_CS"/>
</dbReference>
<dbReference type="NCBIfam" id="TIGR00214">
    <property type="entry name" value="lipB"/>
    <property type="match status" value="1"/>
</dbReference>
<dbReference type="PANTHER" id="PTHR10993:SF7">
    <property type="entry name" value="LIPOYLTRANSFERASE 2, MITOCHONDRIAL-RELATED"/>
    <property type="match status" value="1"/>
</dbReference>
<dbReference type="PANTHER" id="PTHR10993">
    <property type="entry name" value="OCTANOYLTRANSFERASE"/>
    <property type="match status" value="1"/>
</dbReference>
<dbReference type="Pfam" id="PF21948">
    <property type="entry name" value="LplA-B_cat"/>
    <property type="match status" value="1"/>
</dbReference>
<dbReference type="PIRSF" id="PIRSF016262">
    <property type="entry name" value="LPLase"/>
    <property type="match status" value="1"/>
</dbReference>
<dbReference type="SUPFAM" id="SSF55681">
    <property type="entry name" value="Class II aaRS and biotin synthetases"/>
    <property type="match status" value="1"/>
</dbReference>
<dbReference type="PROSITE" id="PS51733">
    <property type="entry name" value="BPL_LPL_CATALYTIC"/>
    <property type="match status" value="1"/>
</dbReference>
<dbReference type="PROSITE" id="PS01313">
    <property type="entry name" value="LIPB"/>
    <property type="match status" value="1"/>
</dbReference>
<name>LIPB2_PICTO</name>
<feature type="chain" id="PRO_0000062904" description="Probable octanoyltransferase 2">
    <location>
        <begin position="1"/>
        <end position="245"/>
    </location>
</feature>
<feature type="domain" description="BPL/LPL catalytic" evidence="2">
    <location>
        <begin position="38"/>
        <end position="227"/>
    </location>
</feature>
<feature type="active site" description="Acyl-thioester intermediate" evidence="1">
    <location>
        <position position="188"/>
    </location>
</feature>
<feature type="binding site" evidence="1">
    <location>
        <begin position="89"/>
        <end position="96"/>
    </location>
    <ligand>
        <name>substrate</name>
    </ligand>
</feature>
<feature type="binding site" evidence="1">
    <location>
        <begin position="157"/>
        <end position="159"/>
    </location>
    <ligand>
        <name>substrate</name>
    </ligand>
</feature>
<feature type="binding site" evidence="1">
    <location>
        <begin position="170"/>
        <end position="172"/>
    </location>
    <ligand>
        <name>substrate</name>
    </ligand>
</feature>
<feature type="site" description="Lowers pKa of active site Cys" evidence="1">
    <location>
        <position position="154"/>
    </location>
</feature>
<gene>
    <name evidence="1" type="primary">lipB2</name>
    <name type="ordered locus">PTO1260</name>
</gene>
<sequence length="245" mass="28660">MKAGHKTIDKSYMHVSLIFYSIIIFMNMPDFIIFETPMEYKPVLYFQRKLVDLRNNDKIDDTFIFLEHNDVYTAGVHYRGNDDIIRVERGGYETYHGPGQLVVYFIINLRERKMNALDLIKKIQNSVVNTLKYYNIESYPMLNEKTGVWHEDRKICSIGIAIRGFSTFHGMALNVNTDLSKFNRIMPCNFSPDIMTSMERISGRPFNINSVRERLIQSIEKEFDIKEKNIYKNVDLVGYGNGLLP</sequence>
<reference key="1">
    <citation type="journal article" date="2004" name="Proc. Natl. Acad. Sci. U.S.A.">
        <title>Genome sequence of Picrophilus torridus and its implications for life around pH 0.</title>
        <authorList>
            <person name="Fuetterer O."/>
            <person name="Angelov A."/>
            <person name="Liesegang H."/>
            <person name="Gottschalk G."/>
            <person name="Schleper C."/>
            <person name="Schepers B."/>
            <person name="Dock C."/>
            <person name="Antranikian G."/>
            <person name="Liebl W."/>
        </authorList>
    </citation>
    <scope>NUCLEOTIDE SEQUENCE [LARGE SCALE GENOMIC DNA]</scope>
    <source>
        <strain>ATCC 700027 / DSM 9790 / JCM 10055 / NBRC 100828 / KAW 2/3</strain>
    </source>
</reference>